<reference key="1">
    <citation type="journal article" date="2004" name="Nat. Genet.">
        <title>Comparison of genome degradation in Paratyphi A and Typhi, human-restricted serovars of Salmonella enterica that cause typhoid.</title>
        <authorList>
            <person name="McClelland M."/>
            <person name="Sanderson K.E."/>
            <person name="Clifton S.W."/>
            <person name="Latreille P."/>
            <person name="Porwollik S."/>
            <person name="Sabo A."/>
            <person name="Meyer R."/>
            <person name="Bieri T."/>
            <person name="Ozersky P."/>
            <person name="McLellan M."/>
            <person name="Harkins C.R."/>
            <person name="Wang C."/>
            <person name="Nguyen C."/>
            <person name="Berghoff A."/>
            <person name="Elliott G."/>
            <person name="Kohlberg S."/>
            <person name="Strong C."/>
            <person name="Du F."/>
            <person name="Carter J."/>
            <person name="Kremizki C."/>
            <person name="Layman D."/>
            <person name="Leonard S."/>
            <person name="Sun H."/>
            <person name="Fulton L."/>
            <person name="Nash W."/>
            <person name="Miner T."/>
            <person name="Minx P."/>
            <person name="Delehaunty K."/>
            <person name="Fronick C."/>
            <person name="Magrini V."/>
            <person name="Nhan M."/>
            <person name="Warren W."/>
            <person name="Florea L."/>
            <person name="Spieth J."/>
            <person name="Wilson R.K."/>
        </authorList>
    </citation>
    <scope>NUCLEOTIDE SEQUENCE [LARGE SCALE GENOMIC DNA]</scope>
    <source>
        <strain>ATCC 9150 / SARB42</strain>
    </source>
</reference>
<keyword id="KW-0963">Cytoplasm</keyword>
<keyword id="KW-0346">Stress response</keyword>
<sequence>MEWKVVDTVISPSTGVSFSCIHSLKNLRLTLWYQADVYMPPGSIIIPFNKGVLINDKLYPVTVYNVTRFNPVLWKSLKENSHCPGNCNPKPEACSYPFECLVSVCPFGLTRNIQIDNKKV</sequence>
<proteinExistence type="inferred from homology"/>
<organism>
    <name type="scientific">Salmonella paratyphi A (strain ATCC 9150 / SARB42)</name>
    <dbReference type="NCBI Taxonomy" id="295319"/>
    <lineage>
        <taxon>Bacteria</taxon>
        <taxon>Pseudomonadati</taxon>
        <taxon>Pseudomonadota</taxon>
        <taxon>Gammaproteobacteria</taxon>
        <taxon>Enterobacterales</taxon>
        <taxon>Enterobacteriaceae</taxon>
        <taxon>Salmonella</taxon>
    </lineage>
</organism>
<comment type="function">
    <text evidence="1">Involved in the stabilization of the sigma stress factor RpoS.</text>
</comment>
<comment type="subcellular location">
    <subcellularLocation>
        <location evidence="1">Cytoplasm</location>
    </subcellularLocation>
</comment>
<comment type="similarity">
    <text evidence="1">Belongs to the IraM/RssC family.</text>
</comment>
<name>IRAM_SALPA</name>
<gene>
    <name evidence="1" type="primary">iraM</name>
    <name evidence="1" type="synonym">rssC</name>
    <name type="ordered locus">SPA1740</name>
</gene>
<protein>
    <recommendedName>
        <fullName evidence="1">Anti-adapter protein IraM</fullName>
    </recommendedName>
    <alternativeName>
        <fullName evidence="1">Sigma S-regulator RssC</fullName>
    </alternativeName>
</protein>
<evidence type="ECO:0000255" key="1">
    <source>
        <dbReference type="HAMAP-Rule" id="MF_01199"/>
    </source>
</evidence>
<feature type="chain" id="PRO_0000337885" description="Anti-adapter protein IraM">
    <location>
        <begin position="1"/>
        <end position="120"/>
    </location>
</feature>
<accession>Q5PGA0</accession>
<dbReference type="EMBL" id="CP000026">
    <property type="protein sequence ID" value="AAV77660.1"/>
    <property type="molecule type" value="Genomic_DNA"/>
</dbReference>
<dbReference type="RefSeq" id="WP_001537781.1">
    <property type="nucleotide sequence ID" value="NC_006511.1"/>
</dbReference>
<dbReference type="SMR" id="Q5PGA0"/>
<dbReference type="KEGG" id="spt:SPA1740"/>
<dbReference type="HOGENOM" id="CLU_143527_1_0_6"/>
<dbReference type="Proteomes" id="UP000008185">
    <property type="component" value="Chromosome"/>
</dbReference>
<dbReference type="GO" id="GO:0005737">
    <property type="term" value="C:cytoplasm"/>
    <property type="evidence" value="ECO:0007669"/>
    <property type="project" value="UniProtKB-SubCell"/>
</dbReference>
<dbReference type="GO" id="GO:0009267">
    <property type="term" value="P:cellular response to starvation"/>
    <property type="evidence" value="ECO:0007669"/>
    <property type="project" value="UniProtKB-UniRule"/>
</dbReference>
<dbReference type="Gene3D" id="2.40.50.650">
    <property type="match status" value="1"/>
</dbReference>
<dbReference type="HAMAP" id="MF_01199">
    <property type="entry name" value="Anti_adapt_IraM"/>
    <property type="match status" value="1"/>
</dbReference>
<dbReference type="InterPro" id="IPR014448">
    <property type="entry name" value="Anti-adapter_IraM"/>
</dbReference>
<dbReference type="InterPro" id="IPR038679">
    <property type="entry name" value="PmrD_sf"/>
</dbReference>
<dbReference type="NCBIfam" id="NF007393">
    <property type="entry name" value="PRK09919.1"/>
    <property type="match status" value="1"/>
</dbReference>
<dbReference type="PIRSF" id="PIRSF007036">
    <property type="entry name" value="Elb1"/>
    <property type="match status" value="1"/>
</dbReference>